<feature type="chain" id="PRO_0000399434" description="Parvalbumin beta 1">
    <location>
        <begin position="1"/>
        <end position="108"/>
    </location>
</feature>
<feature type="domain" description="EF-hand 1" evidence="5">
    <location>
        <begin position="38"/>
        <end position="73"/>
    </location>
</feature>
<feature type="domain" description="EF-hand 2" evidence="5">
    <location>
        <begin position="77"/>
        <end position="108"/>
    </location>
</feature>
<feature type="binding site" evidence="1 5">
    <location>
        <position position="51"/>
    </location>
    <ligand>
        <name>Ca(2+)</name>
        <dbReference type="ChEBI" id="CHEBI:29108"/>
        <label>1</label>
    </ligand>
</feature>
<feature type="binding site" evidence="1 5">
    <location>
        <position position="53"/>
    </location>
    <ligand>
        <name>Ca(2+)</name>
        <dbReference type="ChEBI" id="CHEBI:29108"/>
        <label>1</label>
    </ligand>
</feature>
<feature type="binding site" evidence="1 5">
    <location>
        <position position="55"/>
    </location>
    <ligand>
        <name>Ca(2+)</name>
        <dbReference type="ChEBI" id="CHEBI:29108"/>
        <label>1</label>
    </ligand>
</feature>
<feature type="binding site" evidence="1">
    <location>
        <position position="57"/>
    </location>
    <ligand>
        <name>Ca(2+)</name>
        <dbReference type="ChEBI" id="CHEBI:29108"/>
        <label>1</label>
    </ligand>
</feature>
<feature type="binding site" evidence="1">
    <location>
        <position position="59"/>
    </location>
    <ligand>
        <name>Ca(2+)</name>
        <dbReference type="ChEBI" id="CHEBI:29108"/>
        <label>1</label>
    </ligand>
</feature>
<feature type="binding site" evidence="1 5">
    <location>
        <position position="62"/>
    </location>
    <ligand>
        <name>Ca(2+)</name>
        <dbReference type="ChEBI" id="CHEBI:29108"/>
        <label>1</label>
    </ligand>
</feature>
<feature type="binding site" evidence="1 5">
    <location>
        <position position="90"/>
    </location>
    <ligand>
        <name>Ca(2+)</name>
        <dbReference type="ChEBI" id="CHEBI:29108"/>
        <label>2</label>
    </ligand>
</feature>
<feature type="binding site" evidence="1 5">
    <location>
        <position position="92"/>
    </location>
    <ligand>
        <name>Ca(2+)</name>
        <dbReference type="ChEBI" id="CHEBI:29108"/>
        <label>2</label>
    </ligand>
</feature>
<feature type="binding site" evidence="1 5">
    <location>
        <position position="94"/>
    </location>
    <ligand>
        <name>Ca(2+)</name>
        <dbReference type="ChEBI" id="CHEBI:29108"/>
        <label>2</label>
    </ligand>
</feature>
<feature type="binding site" evidence="5">
    <location>
        <position position="96"/>
    </location>
    <ligand>
        <name>Ca(2+)</name>
        <dbReference type="ChEBI" id="CHEBI:29108"/>
        <label>2</label>
    </ligand>
</feature>
<feature type="binding site" evidence="1 5">
    <location>
        <position position="101"/>
    </location>
    <ligand>
        <name>Ca(2+)</name>
        <dbReference type="ChEBI" id="CHEBI:29108"/>
        <label>2</label>
    </ligand>
</feature>
<feature type="modified residue" description="N-acetylalanine" evidence="6">
    <location>
        <position position="1"/>
    </location>
</feature>
<feature type="unsure residue" description="I or L" evidence="6">
    <location>
        <position position="5"/>
    </location>
</feature>
<feature type="unsure residue" description="L or I" evidence="6">
    <location>
        <position position="6"/>
    </location>
</feature>
<feature type="unsure residue" description="I or L" evidence="6">
    <location>
        <position position="11"/>
    </location>
</feature>
<feature type="unsure residue" description="L or I" evidence="6">
    <location>
        <position position="15"/>
    </location>
</feature>
<feature type="unsure residue" description="K or Q" evidence="6">
    <location>
        <position position="19"/>
    </location>
</feature>
<feature type="unsure residue" description="K or Q" evidence="6">
    <location>
        <position position="25"/>
    </location>
</feature>
<feature type="unsure residue" description="K or Q" evidence="6">
    <location>
        <position position="32"/>
    </location>
</feature>
<feature type="unsure residue" description="I or L" evidence="6">
    <location>
        <position position="33"/>
    </location>
</feature>
<feature type="unsure residue" description="L or I" evidence="6">
    <location>
        <position position="35"/>
    </location>
</feature>
<feature type="unsure residue" description="K or Q" evidence="6">
    <location>
        <position position="36"/>
    </location>
</feature>
<feature type="unsure residue" description="K or Q" evidence="6">
    <location>
        <position position="38"/>
    </location>
</feature>
<feature type="unsure residue" description="I or L" evidence="6">
    <location>
        <position position="43"/>
    </location>
</feature>
<feature type="unsure residue" description="K or Q" evidence="6">
    <location>
        <position position="44"/>
    </location>
</feature>
<feature type="unsure residue" description="K or Q" evidence="6">
    <location>
        <position position="45"/>
    </location>
</feature>
<feature type="unsure residue" description="I or L" evidence="6">
    <location>
        <position position="49"/>
    </location>
</feature>
<feature type="unsure residue" description="I or L" evidence="6">
    <location>
        <position position="50"/>
    </location>
</feature>
<feature type="unsure residue" description="Q or K" evidence="6">
    <location>
        <position position="52"/>
    </location>
</feature>
<feature type="unsure residue" description="K or Q" evidence="6">
    <location>
        <position position="54"/>
    </location>
</feature>
<feature type="unsure residue" description="L or I" evidence="6">
    <location>
        <position position="63"/>
    </location>
</feature>
<feature type="unsure residue" description="K or Q" evidence="6">
    <location>
        <position position="64"/>
    </location>
</feature>
<feature type="unsure residue" description="L or I" evidence="6">
    <location>
        <position position="65"/>
    </location>
</feature>
<feature type="unsure residue" description="L or I" evidence="6">
    <location>
        <position position="67"/>
    </location>
</feature>
<feature type="unsure residue" description="Q or K" evidence="6">
    <location>
        <position position="68"/>
    </location>
</feature>
<feature type="unsure residue" description="L or I" evidence="6">
    <location>
        <position position="77"/>
    </location>
</feature>
<feature type="unsure residue" description="L or I" evidence="6">
    <location>
        <position position="86"/>
    </location>
</feature>
<feature type="unsure residue" description="K or Q" evidence="6">
    <location>
        <position position="87"/>
    </location>
</feature>
<feature type="unsure residue" description="K or Q" evidence="6">
    <location>
        <position position="96"/>
    </location>
</feature>
<feature type="unsure residue" description="I or L" evidence="6">
    <location>
        <position position="97"/>
    </location>
</feature>
<feature type="unsure residue" description="I or L" evidence="6">
    <location>
        <position position="106"/>
    </location>
</feature>
<feature type="unsure residue" description="K or Q" evidence="6">
    <location>
        <position position="107"/>
    </location>
</feature>
<sequence length="108" mass="11339">AFAGILADADITAALAACKAEGTFKHGEFFTKIGLKGKSAADIKKVFGIIDQDKSDFVEEDELKLFLQNFSAGARALTDAETATFLKAGDSDGDGKIGVDEFTAMIKG</sequence>
<reference evidence="8" key="1">
    <citation type="journal article" date="2010" name="J. Proteome Res.">
        <title>Extensive de novo sequencing of new parvalbumin isoforms using a novel combination of bottom-up proteomics, accurate molecular mass measurement by FTICR-MS, and selected MS/MS ion monitoring.</title>
        <authorList>
            <person name="Carrera M."/>
            <person name="Canas B."/>
            <person name="Vazquez J."/>
            <person name="Gallardo J.M."/>
        </authorList>
    </citation>
    <scope>PROTEIN SEQUENCE</scope>
    <scope>MASS SPECTROMETRY</scope>
    <scope>ACETYLATION AT ALA-1</scope>
    <source>
        <tissue evidence="6">Muscle</tissue>
    </source>
</reference>
<protein>
    <recommendedName>
        <fullName evidence="7">Parvalbumin beta 1</fullName>
    </recommendedName>
</protein>
<evidence type="ECO:0000250" key="1">
    <source>
        <dbReference type="UniProtKB" id="P02621"/>
    </source>
</evidence>
<evidence type="ECO:0000250" key="2">
    <source>
        <dbReference type="UniProtKB" id="P02622"/>
    </source>
</evidence>
<evidence type="ECO:0000250" key="3">
    <source>
        <dbReference type="UniProtKB" id="P02624"/>
    </source>
</evidence>
<evidence type="ECO:0000255" key="4"/>
<evidence type="ECO:0000255" key="5">
    <source>
        <dbReference type="PROSITE-ProRule" id="PRU00448"/>
    </source>
</evidence>
<evidence type="ECO:0000269" key="6">
    <source>
    </source>
</evidence>
<evidence type="ECO:0000303" key="7">
    <source>
    </source>
</evidence>
<evidence type="ECO:0000305" key="8"/>
<comment type="function">
    <text evidence="2 3">In muscle, parvalbumin is thought to be involved in relaxation after contraction. It binds two calcium ions (By similarity).</text>
</comment>
<comment type="mass spectrometry" mass="11373.794" error="0.0205" method="Electrospray" evidence="6"/>
<comment type="miscellaneous">
    <text evidence="2 6">Is regarded as an important allergen.</text>
</comment>
<comment type="miscellaneous">
    <text evidence="6">On the 2D-gel the determined pI of this protein is: 4.51, its MW is: 11.37 kDa.</text>
</comment>
<comment type="similarity">
    <text evidence="4">Belongs to the parvalbumin family.</text>
</comment>
<organism>
    <name type="scientific">Merluccius productus</name>
    <name type="common">North Pacific hake</name>
    <name type="synonym">Merlangus productus</name>
    <dbReference type="NCBI Taxonomy" id="89952"/>
    <lineage>
        <taxon>Eukaryota</taxon>
        <taxon>Metazoa</taxon>
        <taxon>Chordata</taxon>
        <taxon>Craniata</taxon>
        <taxon>Vertebrata</taxon>
        <taxon>Euteleostomi</taxon>
        <taxon>Actinopterygii</taxon>
        <taxon>Neopterygii</taxon>
        <taxon>Teleostei</taxon>
        <taxon>Neoteleostei</taxon>
        <taxon>Acanthomorphata</taxon>
        <taxon>Zeiogadaria</taxon>
        <taxon>Gadariae</taxon>
        <taxon>Gadiformes</taxon>
        <taxon>Gadoidei</taxon>
        <taxon>Merlucciidae</taxon>
        <taxon>Merluccius</taxon>
    </lineage>
</organism>
<dbReference type="SMR" id="P86774"/>
<dbReference type="iPTMnet" id="P86774"/>
<dbReference type="GO" id="GO:0005737">
    <property type="term" value="C:cytoplasm"/>
    <property type="evidence" value="ECO:0007669"/>
    <property type="project" value="TreeGrafter"/>
</dbReference>
<dbReference type="GO" id="GO:0005509">
    <property type="term" value="F:calcium ion binding"/>
    <property type="evidence" value="ECO:0007669"/>
    <property type="project" value="InterPro"/>
</dbReference>
<dbReference type="CDD" id="cd16255">
    <property type="entry name" value="EFh_parvalbumin_beta"/>
    <property type="match status" value="1"/>
</dbReference>
<dbReference type="FunFam" id="1.10.238.10:FF:000060">
    <property type="entry name" value="Parvalbumin, thymic"/>
    <property type="match status" value="1"/>
</dbReference>
<dbReference type="Gene3D" id="1.10.238.10">
    <property type="entry name" value="EF-hand"/>
    <property type="match status" value="1"/>
</dbReference>
<dbReference type="InterPro" id="IPR011992">
    <property type="entry name" value="EF-hand-dom_pair"/>
</dbReference>
<dbReference type="InterPro" id="IPR018247">
    <property type="entry name" value="EF_Hand_1_Ca_BS"/>
</dbReference>
<dbReference type="InterPro" id="IPR002048">
    <property type="entry name" value="EF_hand_dom"/>
</dbReference>
<dbReference type="InterPro" id="IPR008080">
    <property type="entry name" value="Parvalbumin"/>
</dbReference>
<dbReference type="PANTHER" id="PTHR11653:SF12">
    <property type="entry name" value="PARVALBUMIN"/>
    <property type="match status" value="1"/>
</dbReference>
<dbReference type="PANTHER" id="PTHR11653">
    <property type="entry name" value="PARVALBUMIN ALPHA"/>
    <property type="match status" value="1"/>
</dbReference>
<dbReference type="Pfam" id="PF13499">
    <property type="entry name" value="EF-hand_7"/>
    <property type="match status" value="1"/>
</dbReference>
<dbReference type="PRINTS" id="PR01697">
    <property type="entry name" value="PARVALBUMIN"/>
</dbReference>
<dbReference type="SUPFAM" id="SSF47473">
    <property type="entry name" value="EF-hand"/>
    <property type="match status" value="1"/>
</dbReference>
<dbReference type="PROSITE" id="PS00018">
    <property type="entry name" value="EF_HAND_1"/>
    <property type="match status" value="2"/>
</dbReference>
<dbReference type="PROSITE" id="PS50222">
    <property type="entry name" value="EF_HAND_2"/>
    <property type="match status" value="2"/>
</dbReference>
<proteinExistence type="evidence at protein level"/>
<keyword id="KW-0007">Acetylation</keyword>
<keyword id="KW-0020">Allergen</keyword>
<keyword id="KW-0106">Calcium</keyword>
<keyword id="KW-0903">Direct protein sequencing</keyword>
<keyword id="KW-0479">Metal-binding</keyword>
<keyword id="KW-0514">Muscle protein</keyword>
<keyword id="KW-0677">Repeat</keyword>
<accession>P86774</accession>
<name>PRVB1_MERPR</name>